<comment type="function">
    <text evidence="1">Catalyzes the transfer of the L-Ara4N moiety of the glycolipid undecaprenyl phosphate-alpha-L-Ara4N to lipid A. The modified arabinose is attached to lipid A and is required for resistance to polymyxin and cationic antimicrobial peptides.</text>
</comment>
<comment type="catalytic activity">
    <reaction evidence="1">
        <text>4-amino-4-deoxy-alpha-L-arabinopyranosyl di-trans,octa-cis-undecaprenyl phosphate + lipid IVA = lipid IIA + di-trans,octa-cis-undecaprenyl phosphate.</text>
        <dbReference type="EC" id="2.4.2.43"/>
    </reaction>
</comment>
<comment type="pathway">
    <text evidence="1">Lipopolysaccharide metabolism; 4-amino-4-deoxy-beta-L-arabinose-lipid A biosynthesis.</text>
</comment>
<comment type="subcellular location">
    <subcellularLocation>
        <location evidence="1">Cell inner membrane</location>
        <topology evidence="1">Multi-pass membrane protein</topology>
    </subcellularLocation>
</comment>
<comment type="similarity">
    <text evidence="1">Belongs to the glycosyltransferase 83 family.</text>
</comment>
<gene>
    <name evidence="1" type="primary">arnT</name>
    <name type="ordered locus">YPK_1835</name>
</gene>
<reference key="1">
    <citation type="submission" date="2008-02" db="EMBL/GenBank/DDBJ databases">
        <title>Complete sequence of Yersinia pseudotuberculosis YPIII.</title>
        <authorList>
            <consortium name="US DOE Joint Genome Institute"/>
            <person name="Copeland A."/>
            <person name="Lucas S."/>
            <person name="Lapidus A."/>
            <person name="Glavina del Rio T."/>
            <person name="Dalin E."/>
            <person name="Tice H."/>
            <person name="Bruce D."/>
            <person name="Goodwin L."/>
            <person name="Pitluck S."/>
            <person name="Munk A.C."/>
            <person name="Brettin T."/>
            <person name="Detter J.C."/>
            <person name="Han C."/>
            <person name="Tapia R."/>
            <person name="Schmutz J."/>
            <person name="Larimer F."/>
            <person name="Land M."/>
            <person name="Hauser L."/>
            <person name="Challacombe J.F."/>
            <person name="Green L."/>
            <person name="Lindler L.E."/>
            <person name="Nikolich M.P."/>
            <person name="Richardson P."/>
        </authorList>
    </citation>
    <scope>NUCLEOTIDE SEQUENCE [LARGE SCALE GENOMIC DNA]</scope>
    <source>
        <strain>YPIII</strain>
    </source>
</reference>
<keyword id="KW-0997">Cell inner membrane</keyword>
<keyword id="KW-1003">Cell membrane</keyword>
<keyword id="KW-0328">Glycosyltransferase</keyword>
<keyword id="KW-0441">Lipid A biosynthesis</keyword>
<keyword id="KW-0444">Lipid biosynthesis</keyword>
<keyword id="KW-0443">Lipid metabolism</keyword>
<keyword id="KW-0448">Lipopolysaccharide biosynthesis</keyword>
<keyword id="KW-0472">Membrane</keyword>
<keyword id="KW-0808">Transferase</keyword>
<keyword id="KW-0812">Transmembrane</keyword>
<keyword id="KW-1133">Transmembrane helix</keyword>
<protein>
    <recommendedName>
        <fullName evidence="1">Undecaprenyl phosphate-alpha-4-amino-4-deoxy-L-arabinose arabinosyl transferase</fullName>
        <ecNumber evidence="1">2.4.2.43</ecNumber>
    </recommendedName>
    <alternativeName>
        <fullName evidence="1">4-amino-4-deoxy-L-arabinose lipid A transferase</fullName>
    </alternativeName>
    <alternativeName>
        <fullName evidence="1">Lipid IV(A) 4-amino-4-deoxy-L-arabinosyltransferase</fullName>
    </alternativeName>
    <alternativeName>
        <fullName evidence="1">Undecaprenyl phosphate-alpha-L-Ara4N transferase</fullName>
    </alternativeName>
</protein>
<sequence length="554" mass="62306">MKLLKDSGAALLALFFVLVYLLPVNSRLLWQPDETRYAEISREMLQRGDWVVPYFMDIRYFEKPVAGYWFNNISQWIFGDSNFAVRFGSIFSTALSAVLVYWLATLLWRNRSTSVLATLIYLSFLLVFGIGTYAVLDPMISLWLTAAMVSFYLTLKAENWQQKVGAYALLGVACGMGFMTKGFLALAVPVIAVLPIVIQQKRIKDLVVFGPIAIVCAVLLSLPWALAIAQREPDFWNYFFWVEHIQRFAEASAQHKSPIWYYLPILCIGVLPWLGLLPGALFKGWRERATKPELFFLLSWVVMPLLFFSVAKGKLPTYILPCMAPLSLLMAAYATDCANNIRMRALKINGVINLLFGVACALVIVVIGLGLVKDIVAYGPQENQKVWLGVLAFAGWGVTGFITLRNNARNWRWAAACPLLFILLVGYLIPQQVVDSKQPQNFIKNNFSELSSSRYVLTDSVGVAAGLAWELKRSDILMFSEKGELTYGLAYPDSQDNYISNDDFPTWLAQARKKGDVSLVVQLARNEALPAHLPSADKVNLMNRLALLWYQKTP</sequence>
<feature type="chain" id="PRO_1000137932" description="Undecaprenyl phosphate-alpha-4-amino-4-deoxy-L-arabinose arabinosyl transferase">
    <location>
        <begin position="1"/>
        <end position="554"/>
    </location>
</feature>
<feature type="transmembrane region" description="Helical" evidence="1">
    <location>
        <begin position="4"/>
        <end position="24"/>
    </location>
</feature>
<feature type="transmembrane region" description="Helical" evidence="1">
    <location>
        <begin position="87"/>
        <end position="107"/>
    </location>
</feature>
<feature type="transmembrane region" description="Helical" evidence="1">
    <location>
        <begin position="115"/>
        <end position="135"/>
    </location>
</feature>
<feature type="transmembrane region" description="Helical" evidence="1">
    <location>
        <begin position="178"/>
        <end position="198"/>
    </location>
</feature>
<feature type="transmembrane region" description="Helical" evidence="1">
    <location>
        <begin position="206"/>
        <end position="226"/>
    </location>
</feature>
<feature type="transmembrane region" description="Helical" evidence="1">
    <location>
        <begin position="262"/>
        <end position="282"/>
    </location>
</feature>
<feature type="transmembrane region" description="Helical" evidence="1">
    <location>
        <begin position="293"/>
        <end position="313"/>
    </location>
</feature>
<feature type="transmembrane region" description="Helical" evidence="1">
    <location>
        <begin position="315"/>
        <end position="335"/>
    </location>
</feature>
<feature type="transmembrane region" description="Helical" evidence="1">
    <location>
        <begin position="351"/>
        <end position="371"/>
    </location>
</feature>
<feature type="transmembrane region" description="Helical" evidence="1">
    <location>
        <begin position="384"/>
        <end position="404"/>
    </location>
</feature>
<feature type="transmembrane region" description="Helical" evidence="1">
    <location>
        <begin position="414"/>
        <end position="434"/>
    </location>
</feature>
<proteinExistence type="inferred from homology"/>
<accession>B1JJ32</accession>
<evidence type="ECO:0000255" key="1">
    <source>
        <dbReference type="HAMAP-Rule" id="MF_01165"/>
    </source>
</evidence>
<organism>
    <name type="scientific">Yersinia pseudotuberculosis serotype O:3 (strain YPIII)</name>
    <dbReference type="NCBI Taxonomy" id="502800"/>
    <lineage>
        <taxon>Bacteria</taxon>
        <taxon>Pseudomonadati</taxon>
        <taxon>Pseudomonadota</taxon>
        <taxon>Gammaproteobacteria</taxon>
        <taxon>Enterobacterales</taxon>
        <taxon>Yersiniaceae</taxon>
        <taxon>Yersinia</taxon>
    </lineage>
</organism>
<dbReference type="EC" id="2.4.2.43" evidence="1"/>
<dbReference type="EMBL" id="CP000950">
    <property type="protein sequence ID" value="ACA68126.1"/>
    <property type="molecule type" value="Genomic_DNA"/>
</dbReference>
<dbReference type="RefSeq" id="WP_012304019.1">
    <property type="nucleotide sequence ID" value="NZ_CP009792.1"/>
</dbReference>
<dbReference type="SMR" id="B1JJ32"/>
<dbReference type="CAZy" id="GT83">
    <property type="family name" value="Glycosyltransferase Family 83"/>
</dbReference>
<dbReference type="KEGG" id="ypy:YPK_1835"/>
<dbReference type="PATRIC" id="fig|502800.11.peg.2504"/>
<dbReference type="UniPathway" id="UPA00037"/>
<dbReference type="GO" id="GO:0005886">
    <property type="term" value="C:plasma membrane"/>
    <property type="evidence" value="ECO:0007669"/>
    <property type="project" value="UniProtKB-SubCell"/>
</dbReference>
<dbReference type="GO" id="GO:0103015">
    <property type="term" value="F:4-amino-4-deoxy-L-arabinose transferase activity"/>
    <property type="evidence" value="ECO:0007669"/>
    <property type="project" value="UniProtKB-EC"/>
</dbReference>
<dbReference type="GO" id="GO:0000030">
    <property type="term" value="F:mannosyltransferase activity"/>
    <property type="evidence" value="ECO:0007669"/>
    <property type="project" value="InterPro"/>
</dbReference>
<dbReference type="GO" id="GO:0009245">
    <property type="term" value="P:lipid A biosynthetic process"/>
    <property type="evidence" value="ECO:0007669"/>
    <property type="project" value="UniProtKB-UniRule"/>
</dbReference>
<dbReference type="GO" id="GO:0009103">
    <property type="term" value="P:lipopolysaccharide biosynthetic process"/>
    <property type="evidence" value="ECO:0007669"/>
    <property type="project" value="UniProtKB-KW"/>
</dbReference>
<dbReference type="GO" id="GO:0006493">
    <property type="term" value="P:protein O-linked glycosylation"/>
    <property type="evidence" value="ECO:0007669"/>
    <property type="project" value="InterPro"/>
</dbReference>
<dbReference type="GO" id="GO:0010041">
    <property type="term" value="P:response to iron(III) ion"/>
    <property type="evidence" value="ECO:0007669"/>
    <property type="project" value="TreeGrafter"/>
</dbReference>
<dbReference type="HAMAP" id="MF_01165">
    <property type="entry name" value="ArnT_transfer"/>
    <property type="match status" value="1"/>
</dbReference>
<dbReference type="InterPro" id="IPR022839">
    <property type="entry name" value="ArnT_tfrase"/>
</dbReference>
<dbReference type="InterPro" id="IPR003342">
    <property type="entry name" value="Glyco_trans_39/83"/>
</dbReference>
<dbReference type="InterPro" id="IPR050297">
    <property type="entry name" value="LipidA_mod_glycosyltrf_83"/>
</dbReference>
<dbReference type="NCBIfam" id="NF009784">
    <property type="entry name" value="PRK13279.1"/>
    <property type="match status" value="1"/>
</dbReference>
<dbReference type="PANTHER" id="PTHR33908">
    <property type="entry name" value="MANNOSYLTRANSFERASE YKCB-RELATED"/>
    <property type="match status" value="1"/>
</dbReference>
<dbReference type="PANTHER" id="PTHR33908:SF3">
    <property type="entry name" value="UNDECAPRENYL PHOSPHATE-ALPHA-4-AMINO-4-DEOXY-L-ARABINOSE ARABINOSYL TRANSFERASE"/>
    <property type="match status" value="1"/>
</dbReference>
<dbReference type="Pfam" id="PF02366">
    <property type="entry name" value="PMT"/>
    <property type="match status" value="1"/>
</dbReference>
<name>ARNT_YERPY</name>